<sequence length="47" mass="5463">MQVLSSLRSAKNRHPDCKIVRRRGRVYVICKSNPRFKAVQGGTHKKR</sequence>
<name>RL36_YERPA</name>
<keyword id="KW-0687">Ribonucleoprotein</keyword>
<keyword id="KW-0689">Ribosomal protein</keyword>
<feature type="chain" id="PRO_0000302335" description="Large ribosomal subunit protein bL36">
    <location>
        <begin position="1"/>
        <end position="47"/>
    </location>
</feature>
<dbReference type="EMBL" id="CP000308">
    <property type="protein sequence ID" value="ABG14592.1"/>
    <property type="molecule type" value="Genomic_DNA"/>
</dbReference>
<dbReference type="SMR" id="Q1C4N0"/>
<dbReference type="KEGG" id="ypa:YPA_2630"/>
<dbReference type="Proteomes" id="UP000001971">
    <property type="component" value="Chromosome"/>
</dbReference>
<dbReference type="GO" id="GO:1990904">
    <property type="term" value="C:ribonucleoprotein complex"/>
    <property type="evidence" value="ECO:0007669"/>
    <property type="project" value="UniProtKB-KW"/>
</dbReference>
<dbReference type="GO" id="GO:0005840">
    <property type="term" value="C:ribosome"/>
    <property type="evidence" value="ECO:0007669"/>
    <property type="project" value="UniProtKB-KW"/>
</dbReference>
<dbReference type="GO" id="GO:0003735">
    <property type="term" value="F:structural constituent of ribosome"/>
    <property type="evidence" value="ECO:0007669"/>
    <property type="project" value="InterPro"/>
</dbReference>
<dbReference type="GO" id="GO:0006412">
    <property type="term" value="P:translation"/>
    <property type="evidence" value="ECO:0007669"/>
    <property type="project" value="UniProtKB-UniRule"/>
</dbReference>
<dbReference type="HAMAP" id="MF_00251">
    <property type="entry name" value="Ribosomal_bL36"/>
    <property type="match status" value="1"/>
</dbReference>
<dbReference type="InterPro" id="IPR000473">
    <property type="entry name" value="Ribosomal_bL36"/>
</dbReference>
<dbReference type="InterPro" id="IPR035977">
    <property type="entry name" value="Ribosomal_bL36_sp"/>
</dbReference>
<dbReference type="InterPro" id="IPR047621">
    <property type="entry name" value="Ribosomal_L36_bact"/>
</dbReference>
<dbReference type="NCBIfam" id="NF002021">
    <property type="entry name" value="PRK00831.1"/>
    <property type="match status" value="1"/>
</dbReference>
<dbReference type="NCBIfam" id="TIGR01022">
    <property type="entry name" value="rpmJ_bact"/>
    <property type="match status" value="1"/>
</dbReference>
<dbReference type="PANTHER" id="PTHR47781">
    <property type="entry name" value="50S RIBOSOMAL PROTEIN L36 2"/>
    <property type="match status" value="1"/>
</dbReference>
<dbReference type="PANTHER" id="PTHR47781:SF1">
    <property type="entry name" value="LARGE RIBOSOMAL SUBUNIT PROTEIN BL36B"/>
    <property type="match status" value="1"/>
</dbReference>
<dbReference type="Pfam" id="PF00444">
    <property type="entry name" value="Ribosomal_L36"/>
    <property type="match status" value="1"/>
</dbReference>
<dbReference type="SUPFAM" id="SSF57840">
    <property type="entry name" value="Ribosomal protein L36"/>
    <property type="match status" value="1"/>
</dbReference>
<dbReference type="PROSITE" id="PS00828">
    <property type="entry name" value="RIBOSOMAL_L36"/>
    <property type="match status" value="1"/>
</dbReference>
<protein>
    <recommendedName>
        <fullName evidence="1">Large ribosomal subunit protein bL36</fullName>
    </recommendedName>
    <alternativeName>
        <fullName evidence="2">50S ribosomal protein L36</fullName>
    </alternativeName>
</protein>
<comment type="similarity">
    <text evidence="1">Belongs to the bacterial ribosomal protein bL36 family.</text>
</comment>
<organism>
    <name type="scientific">Yersinia pestis bv. Antiqua (strain Antiqua)</name>
    <dbReference type="NCBI Taxonomy" id="360102"/>
    <lineage>
        <taxon>Bacteria</taxon>
        <taxon>Pseudomonadati</taxon>
        <taxon>Pseudomonadota</taxon>
        <taxon>Gammaproteobacteria</taxon>
        <taxon>Enterobacterales</taxon>
        <taxon>Yersiniaceae</taxon>
        <taxon>Yersinia</taxon>
    </lineage>
</organism>
<evidence type="ECO:0000255" key="1">
    <source>
        <dbReference type="HAMAP-Rule" id="MF_00251"/>
    </source>
</evidence>
<evidence type="ECO:0000305" key="2"/>
<proteinExistence type="inferred from homology"/>
<accession>Q1C4N0</accession>
<reference key="1">
    <citation type="journal article" date="2006" name="J. Bacteriol.">
        <title>Complete genome sequence of Yersinia pestis strains Antiqua and Nepal516: evidence of gene reduction in an emerging pathogen.</title>
        <authorList>
            <person name="Chain P.S.G."/>
            <person name="Hu P."/>
            <person name="Malfatti S.A."/>
            <person name="Radnedge L."/>
            <person name="Larimer F."/>
            <person name="Vergez L.M."/>
            <person name="Worsham P."/>
            <person name="Chu M.C."/>
            <person name="Andersen G.L."/>
        </authorList>
    </citation>
    <scope>NUCLEOTIDE SEQUENCE [LARGE SCALE GENOMIC DNA]</scope>
    <source>
        <strain>Antiqua</strain>
    </source>
</reference>
<gene>
    <name evidence="1" type="primary">rpmJ</name>
    <name type="ordered locus">YPA_2630</name>
</gene>